<reference key="1">
    <citation type="journal article" date="2003" name="Nucleic Acids Res.">
        <title>What's in the genome of a filamentous fungus? Analysis of the Neurospora genome sequence.</title>
        <authorList>
            <person name="Mannhaupt G."/>
            <person name="Montrone C."/>
            <person name="Haase D."/>
            <person name="Mewes H.-W."/>
            <person name="Aign V."/>
            <person name="Hoheisel J.D."/>
            <person name="Fartmann B."/>
            <person name="Nyakatura G."/>
            <person name="Kempken F."/>
            <person name="Maier J."/>
            <person name="Schulte U."/>
        </authorList>
    </citation>
    <scope>NUCLEOTIDE SEQUENCE [LARGE SCALE GENOMIC DNA]</scope>
    <source>
        <strain>ATCC 24698 / 74-OR23-1A / CBS 708.71 / DSM 1257 / FGSC 987</strain>
    </source>
</reference>
<reference key="2">
    <citation type="journal article" date="2003" name="Nature">
        <title>The genome sequence of the filamentous fungus Neurospora crassa.</title>
        <authorList>
            <person name="Galagan J.E."/>
            <person name="Calvo S.E."/>
            <person name="Borkovich K.A."/>
            <person name="Selker E.U."/>
            <person name="Read N.D."/>
            <person name="Jaffe D.B."/>
            <person name="FitzHugh W."/>
            <person name="Ma L.-J."/>
            <person name="Smirnov S."/>
            <person name="Purcell S."/>
            <person name="Rehman B."/>
            <person name="Elkins T."/>
            <person name="Engels R."/>
            <person name="Wang S."/>
            <person name="Nielsen C.B."/>
            <person name="Butler J."/>
            <person name="Endrizzi M."/>
            <person name="Qui D."/>
            <person name="Ianakiev P."/>
            <person name="Bell-Pedersen D."/>
            <person name="Nelson M.A."/>
            <person name="Werner-Washburne M."/>
            <person name="Selitrennikoff C.P."/>
            <person name="Kinsey J.A."/>
            <person name="Braun E.L."/>
            <person name="Zelter A."/>
            <person name="Schulte U."/>
            <person name="Kothe G.O."/>
            <person name="Jedd G."/>
            <person name="Mewes H.-W."/>
            <person name="Staben C."/>
            <person name="Marcotte E."/>
            <person name="Greenberg D."/>
            <person name="Roy A."/>
            <person name="Foley K."/>
            <person name="Naylor J."/>
            <person name="Stange-Thomann N."/>
            <person name="Barrett R."/>
            <person name="Gnerre S."/>
            <person name="Kamal M."/>
            <person name="Kamvysselis M."/>
            <person name="Mauceli E.W."/>
            <person name="Bielke C."/>
            <person name="Rudd S."/>
            <person name="Frishman D."/>
            <person name="Krystofova S."/>
            <person name="Rasmussen C."/>
            <person name="Metzenberg R.L."/>
            <person name="Perkins D.D."/>
            <person name="Kroken S."/>
            <person name="Cogoni C."/>
            <person name="Macino G."/>
            <person name="Catcheside D.E.A."/>
            <person name="Li W."/>
            <person name="Pratt R.J."/>
            <person name="Osmani S.A."/>
            <person name="DeSouza C.P.C."/>
            <person name="Glass N.L."/>
            <person name="Orbach M.J."/>
            <person name="Berglund J.A."/>
            <person name="Voelker R."/>
            <person name="Yarden O."/>
            <person name="Plamann M."/>
            <person name="Seiler S."/>
            <person name="Dunlap J.C."/>
            <person name="Radford A."/>
            <person name="Aramayo R."/>
            <person name="Natvig D.O."/>
            <person name="Alex L.A."/>
            <person name="Mannhaupt G."/>
            <person name="Ebbole D.J."/>
            <person name="Freitag M."/>
            <person name="Paulsen I."/>
            <person name="Sachs M.S."/>
            <person name="Lander E.S."/>
            <person name="Nusbaum C."/>
            <person name="Birren B.W."/>
        </authorList>
    </citation>
    <scope>NUCLEOTIDE SEQUENCE [LARGE SCALE GENOMIC DNA]</scope>
    <source>
        <strain>ATCC 24698 / 74-OR23-1A / CBS 708.71 / DSM 1257 / FGSC 987</strain>
    </source>
</reference>
<protein>
    <recommendedName>
        <fullName>ATP synthase subunit 5, mitochondrial</fullName>
        <shortName>ATP synthase chain 5</shortName>
    </recommendedName>
    <alternativeName>
        <fullName>Oligomycin sensitivity conferral protein</fullName>
        <shortName>OSCP</shortName>
    </alternativeName>
</protein>
<evidence type="ECO:0000250" key="1"/>
<evidence type="ECO:0000255" key="2"/>
<evidence type="ECO:0000305" key="3"/>
<comment type="function">
    <text evidence="1">Mitochondrial membrane ATP synthase (F(1)F(0) ATP synthase or Complex V) produces ATP from ADP in the presence of a proton gradient across the membrane which is generated by electron transport complexes of the respiratory chain. F-type ATPases consist of two structural domains, F(1) - containing the extramembraneous catalytic core and F(0) - containing the membrane proton channel, linked together by a central stalk and a peripheral stalk. During catalysis, ATP synthesis in the catalytic domain of F(1) is coupled via a rotary mechanism of the central stalk subunits to proton translocation. Part of the complex F(0) domain and the peripheric stalk, which acts as a stator to hold the catalytic alpha(3)beta(3) subcomplex and subunit a/ATP6 static relative to the rotary elements (By similarity).</text>
</comment>
<comment type="subunit">
    <text evidence="1">F-type ATPases have 2 components, CF(1) - the catalytic core - and CF(0) - the membrane proton channel. CF(1) has five subunits: alpha(3), beta(3), gamma(1), delta(1), epsilon(1). CF(0) has three main subunits: a, b and c (By similarity).</text>
</comment>
<comment type="subcellular location">
    <subcellularLocation>
        <location>Mitochondrion</location>
    </subcellularLocation>
    <subcellularLocation>
        <location>Mitochondrion inner membrane</location>
    </subcellularLocation>
</comment>
<comment type="similarity">
    <text evidence="3">Belongs to the ATPase delta chain family.</text>
</comment>
<gene>
    <name type="primary">atp-5</name>
    <name type="ORF">B2O8.150</name>
    <name type="ORF">NCU01606</name>
</gene>
<sequence>MLSRQALLRPARVLNTQVRTYAAAAAASSKVKPPVTLFGLDGTYATALYTAAVKTSALEPTAKAISSLGNLLAKDPKLASILETPTLSPADKSAIVAELQKSVGVSNETVKNFLATLAENNRLGLLPSVVAKFSELMSAARGEVEMVVTSAQPLDNKTLNRLESAVAKSPYVGSGKKLKVTNKVNADIIGGLVVEIGERTIDLSVSSKIAKMNKLLSEAL</sequence>
<name>ATPO_NEUCR</name>
<keyword id="KW-0066">ATP synthesis</keyword>
<keyword id="KW-0375">Hydrogen ion transport</keyword>
<keyword id="KW-0406">Ion transport</keyword>
<keyword id="KW-0472">Membrane</keyword>
<keyword id="KW-0496">Mitochondrion</keyword>
<keyword id="KW-0999">Mitochondrion inner membrane</keyword>
<keyword id="KW-1185">Reference proteome</keyword>
<keyword id="KW-0809">Transit peptide</keyword>
<keyword id="KW-0813">Transport</keyword>
<feature type="transit peptide" description="Mitochondrion" evidence="2">
    <location>
        <begin position="1"/>
        <end status="unknown"/>
    </location>
</feature>
<feature type="chain" id="PRO_0000002654" description="ATP synthase subunit 5, mitochondrial">
    <location>
        <begin status="unknown"/>
        <end position="220"/>
    </location>
</feature>
<organism>
    <name type="scientific">Neurospora crassa (strain ATCC 24698 / 74-OR23-1A / CBS 708.71 / DSM 1257 / FGSC 987)</name>
    <dbReference type="NCBI Taxonomy" id="367110"/>
    <lineage>
        <taxon>Eukaryota</taxon>
        <taxon>Fungi</taxon>
        <taxon>Dikarya</taxon>
        <taxon>Ascomycota</taxon>
        <taxon>Pezizomycotina</taxon>
        <taxon>Sordariomycetes</taxon>
        <taxon>Sordariomycetidae</taxon>
        <taxon>Sordariales</taxon>
        <taxon>Sordariaceae</taxon>
        <taxon>Neurospora</taxon>
    </lineage>
</organism>
<dbReference type="EMBL" id="AL355930">
    <property type="protein sequence ID" value="CAB91368.2"/>
    <property type="molecule type" value="Genomic_DNA"/>
</dbReference>
<dbReference type="EMBL" id="CM002237">
    <property type="protein sequence ID" value="EAA27281.1"/>
    <property type="molecule type" value="Genomic_DNA"/>
</dbReference>
<dbReference type="PIR" id="T49580">
    <property type="entry name" value="T49580"/>
</dbReference>
<dbReference type="RefSeq" id="XP_956517.1">
    <property type="nucleotide sequence ID" value="XM_951424.3"/>
</dbReference>
<dbReference type="SMR" id="Q9P602"/>
<dbReference type="FunCoup" id="Q9P602">
    <property type="interactions" value="689"/>
</dbReference>
<dbReference type="STRING" id="367110.Q9P602"/>
<dbReference type="PaxDb" id="5141-EFNCRP00000001757"/>
<dbReference type="EnsemblFungi" id="EAA27281">
    <property type="protein sequence ID" value="EAA27281"/>
    <property type="gene ID" value="NCU01606"/>
</dbReference>
<dbReference type="GeneID" id="3872665"/>
<dbReference type="KEGG" id="ncr:NCU01606"/>
<dbReference type="VEuPathDB" id="FungiDB:NCU01606"/>
<dbReference type="HOGENOM" id="CLU_085114_0_0_1"/>
<dbReference type="InParanoid" id="Q9P602"/>
<dbReference type="OrthoDB" id="1262810at2759"/>
<dbReference type="Proteomes" id="UP000001805">
    <property type="component" value="Chromosome 6, Linkage Group II"/>
</dbReference>
<dbReference type="GO" id="GO:0005743">
    <property type="term" value="C:mitochondrial inner membrane"/>
    <property type="evidence" value="ECO:0007669"/>
    <property type="project" value="UniProtKB-SubCell"/>
</dbReference>
<dbReference type="GO" id="GO:0045259">
    <property type="term" value="C:proton-transporting ATP synthase complex"/>
    <property type="evidence" value="ECO:0007669"/>
    <property type="project" value="EnsemblFungi"/>
</dbReference>
<dbReference type="GO" id="GO:0046933">
    <property type="term" value="F:proton-transporting ATP synthase activity, rotational mechanism"/>
    <property type="evidence" value="ECO:0007669"/>
    <property type="project" value="EnsemblFungi"/>
</dbReference>
<dbReference type="GO" id="GO:0042776">
    <property type="term" value="P:proton motive force-driven mitochondrial ATP synthesis"/>
    <property type="evidence" value="ECO:0000318"/>
    <property type="project" value="GO_Central"/>
</dbReference>
<dbReference type="Gene3D" id="1.10.520.20">
    <property type="entry name" value="N-terminal domain of the delta subunit of the F1F0-ATP synthase"/>
    <property type="match status" value="1"/>
</dbReference>
<dbReference type="HAMAP" id="MF_01416">
    <property type="entry name" value="ATP_synth_delta_bact"/>
    <property type="match status" value="1"/>
</dbReference>
<dbReference type="InterPro" id="IPR026015">
    <property type="entry name" value="ATP_synth_OSCP/delta_N_sf"/>
</dbReference>
<dbReference type="InterPro" id="IPR020781">
    <property type="entry name" value="ATPase_OSCP/d_CS"/>
</dbReference>
<dbReference type="InterPro" id="IPR000711">
    <property type="entry name" value="ATPase_OSCP/dsu"/>
</dbReference>
<dbReference type="NCBIfam" id="TIGR01145">
    <property type="entry name" value="ATP_synt_delta"/>
    <property type="match status" value="1"/>
</dbReference>
<dbReference type="PANTHER" id="PTHR11910">
    <property type="entry name" value="ATP SYNTHASE DELTA CHAIN"/>
    <property type="match status" value="1"/>
</dbReference>
<dbReference type="Pfam" id="PF00213">
    <property type="entry name" value="OSCP"/>
    <property type="match status" value="1"/>
</dbReference>
<dbReference type="PRINTS" id="PR00125">
    <property type="entry name" value="ATPASEDELTA"/>
</dbReference>
<dbReference type="SUPFAM" id="SSF47928">
    <property type="entry name" value="N-terminal domain of the delta subunit of the F1F0-ATP synthase"/>
    <property type="match status" value="1"/>
</dbReference>
<dbReference type="PROSITE" id="PS00389">
    <property type="entry name" value="ATPASE_DELTA"/>
    <property type="match status" value="1"/>
</dbReference>
<accession>Q9P602</accession>
<accession>Q7RXF8</accession>
<proteinExistence type="inferred from homology"/>